<accession>Q3JMZ5</accession>
<proteinExistence type="inferred from homology"/>
<protein>
    <recommendedName>
        <fullName evidence="1">ATP phosphoribosyltransferase</fullName>
        <shortName evidence="1">ATP-PRT</shortName>
        <shortName evidence="1">ATP-PRTase</shortName>
        <ecNumber evidence="1">2.4.2.17</ecNumber>
    </recommendedName>
</protein>
<organism>
    <name type="scientific">Burkholderia pseudomallei (strain 1710b)</name>
    <dbReference type="NCBI Taxonomy" id="320372"/>
    <lineage>
        <taxon>Bacteria</taxon>
        <taxon>Pseudomonadati</taxon>
        <taxon>Pseudomonadota</taxon>
        <taxon>Betaproteobacteria</taxon>
        <taxon>Burkholderiales</taxon>
        <taxon>Burkholderiaceae</taxon>
        <taxon>Burkholderia</taxon>
        <taxon>pseudomallei group</taxon>
    </lineage>
</organism>
<keyword id="KW-0028">Amino-acid biosynthesis</keyword>
<keyword id="KW-0067">ATP-binding</keyword>
<keyword id="KW-0963">Cytoplasm</keyword>
<keyword id="KW-0328">Glycosyltransferase</keyword>
<keyword id="KW-0368">Histidine biosynthesis</keyword>
<keyword id="KW-0547">Nucleotide-binding</keyword>
<keyword id="KW-0808">Transferase</keyword>
<evidence type="ECO:0000255" key="1">
    <source>
        <dbReference type="HAMAP-Rule" id="MF_01018"/>
    </source>
</evidence>
<name>HIS1_BURP1</name>
<gene>
    <name evidence="1" type="primary">hisG</name>
    <name type="ordered locus">BURPS1710b_3694</name>
</gene>
<reference key="1">
    <citation type="journal article" date="2010" name="Genome Biol. Evol.">
        <title>Continuing evolution of Burkholderia mallei through genome reduction and large-scale rearrangements.</title>
        <authorList>
            <person name="Losada L."/>
            <person name="Ronning C.M."/>
            <person name="DeShazer D."/>
            <person name="Woods D."/>
            <person name="Fedorova N."/>
            <person name="Kim H.S."/>
            <person name="Shabalina S.A."/>
            <person name="Pearson T.R."/>
            <person name="Brinkac L."/>
            <person name="Tan P."/>
            <person name="Nandi T."/>
            <person name="Crabtree J."/>
            <person name="Badger J."/>
            <person name="Beckstrom-Sternberg S."/>
            <person name="Saqib M."/>
            <person name="Schutzer S.E."/>
            <person name="Keim P."/>
            <person name="Nierman W.C."/>
        </authorList>
    </citation>
    <scope>NUCLEOTIDE SEQUENCE [LARGE SCALE GENOMIC DNA]</scope>
    <source>
        <strain>1710b</strain>
    </source>
</reference>
<comment type="function">
    <text evidence="1">Catalyzes the condensation of ATP and 5-phosphoribose 1-diphosphate to form N'-(5'-phosphoribosyl)-ATP (PR-ATP). Has a crucial role in the pathway because the rate of histidine biosynthesis seems to be controlled primarily by regulation of HisG enzymatic activity.</text>
</comment>
<comment type="catalytic activity">
    <reaction evidence="1">
        <text>1-(5-phospho-beta-D-ribosyl)-ATP + diphosphate = 5-phospho-alpha-D-ribose 1-diphosphate + ATP</text>
        <dbReference type="Rhea" id="RHEA:18473"/>
        <dbReference type="ChEBI" id="CHEBI:30616"/>
        <dbReference type="ChEBI" id="CHEBI:33019"/>
        <dbReference type="ChEBI" id="CHEBI:58017"/>
        <dbReference type="ChEBI" id="CHEBI:73183"/>
        <dbReference type="EC" id="2.4.2.17"/>
    </reaction>
</comment>
<comment type="pathway">
    <text evidence="1">Amino-acid biosynthesis; L-histidine biosynthesis; L-histidine from 5-phospho-alpha-D-ribose 1-diphosphate: step 1/9.</text>
</comment>
<comment type="subunit">
    <text evidence="1">Heteromultimer composed of HisG and HisZ subunits.</text>
</comment>
<comment type="subcellular location">
    <subcellularLocation>
        <location evidence="1">Cytoplasm</location>
    </subcellularLocation>
</comment>
<comment type="domain">
    <text>Lacks the C-terminal regulatory region which is replaced by HisZ.</text>
</comment>
<comment type="similarity">
    <text evidence="1">Belongs to the ATP phosphoribosyltransferase family. Short subfamily.</text>
</comment>
<dbReference type="EC" id="2.4.2.17" evidence="1"/>
<dbReference type="EMBL" id="CP000124">
    <property type="protein sequence ID" value="ABA51060.1"/>
    <property type="molecule type" value="Genomic_DNA"/>
</dbReference>
<dbReference type="RefSeq" id="WP_004199915.1">
    <property type="nucleotide sequence ID" value="NC_007434.1"/>
</dbReference>
<dbReference type="SMR" id="Q3JMZ5"/>
<dbReference type="EnsemblBacteria" id="ABA51060">
    <property type="protein sequence ID" value="ABA51060"/>
    <property type="gene ID" value="BURPS1710b_3694"/>
</dbReference>
<dbReference type="GeneID" id="93061757"/>
<dbReference type="KEGG" id="bpm:BURPS1710b_3694"/>
<dbReference type="HOGENOM" id="CLU_038115_2_0_4"/>
<dbReference type="UniPathway" id="UPA00031">
    <property type="reaction ID" value="UER00006"/>
</dbReference>
<dbReference type="Proteomes" id="UP000002700">
    <property type="component" value="Chromosome I"/>
</dbReference>
<dbReference type="GO" id="GO:0005737">
    <property type="term" value="C:cytoplasm"/>
    <property type="evidence" value="ECO:0007669"/>
    <property type="project" value="UniProtKB-SubCell"/>
</dbReference>
<dbReference type="GO" id="GO:0005524">
    <property type="term" value="F:ATP binding"/>
    <property type="evidence" value="ECO:0007669"/>
    <property type="project" value="UniProtKB-KW"/>
</dbReference>
<dbReference type="GO" id="GO:0003879">
    <property type="term" value="F:ATP phosphoribosyltransferase activity"/>
    <property type="evidence" value="ECO:0007669"/>
    <property type="project" value="UniProtKB-UniRule"/>
</dbReference>
<dbReference type="GO" id="GO:0000105">
    <property type="term" value="P:L-histidine biosynthetic process"/>
    <property type="evidence" value="ECO:0007669"/>
    <property type="project" value="UniProtKB-UniRule"/>
</dbReference>
<dbReference type="CDD" id="cd13595">
    <property type="entry name" value="PBP2_HisGs"/>
    <property type="match status" value="1"/>
</dbReference>
<dbReference type="FunFam" id="3.40.190.10:FF:000011">
    <property type="entry name" value="ATP phosphoribosyltransferase"/>
    <property type="match status" value="1"/>
</dbReference>
<dbReference type="Gene3D" id="3.40.190.10">
    <property type="entry name" value="Periplasmic binding protein-like II"/>
    <property type="match status" value="2"/>
</dbReference>
<dbReference type="HAMAP" id="MF_01018">
    <property type="entry name" value="HisG_Short"/>
    <property type="match status" value="1"/>
</dbReference>
<dbReference type="InterPro" id="IPR013820">
    <property type="entry name" value="ATP_PRibTrfase_cat"/>
</dbReference>
<dbReference type="InterPro" id="IPR018198">
    <property type="entry name" value="ATP_PRibTrfase_CS"/>
</dbReference>
<dbReference type="InterPro" id="IPR001348">
    <property type="entry name" value="ATP_PRibTrfase_HisG"/>
</dbReference>
<dbReference type="InterPro" id="IPR024893">
    <property type="entry name" value="ATP_PRibTrfase_HisG_short"/>
</dbReference>
<dbReference type="NCBIfam" id="TIGR00070">
    <property type="entry name" value="hisG"/>
    <property type="match status" value="1"/>
</dbReference>
<dbReference type="PANTHER" id="PTHR21403:SF8">
    <property type="entry name" value="ATP PHOSPHORIBOSYLTRANSFERASE"/>
    <property type="match status" value="1"/>
</dbReference>
<dbReference type="PANTHER" id="PTHR21403">
    <property type="entry name" value="ATP PHOSPHORIBOSYLTRANSFERASE ATP-PRTASE"/>
    <property type="match status" value="1"/>
</dbReference>
<dbReference type="Pfam" id="PF01634">
    <property type="entry name" value="HisG"/>
    <property type="match status" value="1"/>
</dbReference>
<dbReference type="SUPFAM" id="SSF53850">
    <property type="entry name" value="Periplasmic binding protein-like II"/>
    <property type="match status" value="1"/>
</dbReference>
<dbReference type="PROSITE" id="PS01316">
    <property type="entry name" value="ATP_P_PHORIBOSYLTR"/>
    <property type="match status" value="1"/>
</dbReference>
<feature type="chain" id="PRO_0000229311" description="ATP phosphoribosyltransferase">
    <location>
        <begin position="1"/>
        <end position="218"/>
    </location>
</feature>
<sequence length="218" mass="23067">MSAPLTLALSKGRIFEETVPLLAAAGVTVAEDPETSRKLILPTTDPNLRVIVVRATDVPTYVEYGAADFGVAGKDVLLEHGGGGLYQPIDLNIARCRMSVAVPAGFDYANAVRQGARLRVATKYVETAREHFAAKGVHVDLIKLYGSMELAPLVGLADAIVDLVSSGGTLKANNLVEVEEIMPISSRLVVNQAALKLKRAALKPFLDAFERASLGSGA</sequence>